<protein>
    <recommendedName>
        <fullName evidence="2">Ubiquitin-related modifier 1 homolog</fullName>
    </recommendedName>
</protein>
<name>URM1_DROVI</name>
<sequence>MPDLKIILEFSAGAELLFGNIKRRELALDGDQKWTIANLLKWMHANILTERPELFIQESTVRPGILVLINDTDWELLGELDYELQQNDNVLFISTLHGG</sequence>
<reference key="1">
    <citation type="journal article" date="2007" name="Nature">
        <title>Evolution of genes and genomes on the Drosophila phylogeny.</title>
        <authorList>
            <consortium name="Drosophila 12 genomes consortium"/>
        </authorList>
    </citation>
    <scope>NUCLEOTIDE SEQUENCE [LARGE SCALE GENOMIC DNA]</scope>
    <source>
        <strain>Tucson 15010-1051.87</strain>
    </source>
</reference>
<accession>B4LE67</accession>
<dbReference type="EMBL" id="CH940647">
    <property type="protein sequence ID" value="EDW69023.1"/>
    <property type="molecule type" value="Genomic_DNA"/>
</dbReference>
<dbReference type="RefSeq" id="XP_002046681.1">
    <property type="nucleotide sequence ID" value="XM_002046645.2"/>
</dbReference>
<dbReference type="SMR" id="B4LE67"/>
<dbReference type="FunCoup" id="B4LE67">
    <property type="interactions" value="1384"/>
</dbReference>
<dbReference type="STRING" id="7244.B4LE67"/>
<dbReference type="EnsemblMetazoa" id="FBtr0228275">
    <property type="protein sequence ID" value="FBpp0226767"/>
    <property type="gene ID" value="FBgn0199595"/>
</dbReference>
<dbReference type="EnsemblMetazoa" id="XM_002046645.3">
    <property type="protein sequence ID" value="XP_002046681.2"/>
    <property type="gene ID" value="LOC6622693"/>
</dbReference>
<dbReference type="GeneID" id="6622693"/>
<dbReference type="KEGG" id="dvi:6622693"/>
<dbReference type="CTD" id="81605"/>
<dbReference type="eggNOG" id="KOG4146">
    <property type="taxonomic scope" value="Eukaryota"/>
</dbReference>
<dbReference type="HOGENOM" id="CLU_148208_0_1_1"/>
<dbReference type="InParanoid" id="B4LE67"/>
<dbReference type="OMA" id="DYELQPN"/>
<dbReference type="OrthoDB" id="10248987at2759"/>
<dbReference type="PhylomeDB" id="B4LE67"/>
<dbReference type="UniPathway" id="UPA00988"/>
<dbReference type="Proteomes" id="UP000008792">
    <property type="component" value="Unassembled WGS sequence"/>
</dbReference>
<dbReference type="GO" id="GO:0005829">
    <property type="term" value="C:cytosol"/>
    <property type="evidence" value="ECO:0007669"/>
    <property type="project" value="UniProtKB-UniRule"/>
</dbReference>
<dbReference type="GO" id="GO:0046329">
    <property type="term" value="P:negative regulation of JNK cascade"/>
    <property type="evidence" value="ECO:0007669"/>
    <property type="project" value="EnsemblMetazoa"/>
</dbReference>
<dbReference type="GO" id="GO:0032447">
    <property type="term" value="P:protein urmylation"/>
    <property type="evidence" value="ECO:0007669"/>
    <property type="project" value="UniProtKB-UniRule"/>
</dbReference>
<dbReference type="GO" id="GO:0034227">
    <property type="term" value="P:tRNA thio-modification"/>
    <property type="evidence" value="ECO:0007669"/>
    <property type="project" value="UniProtKB-UniRule"/>
</dbReference>
<dbReference type="GO" id="GO:0002098">
    <property type="term" value="P:tRNA wobble uridine modification"/>
    <property type="evidence" value="ECO:0007669"/>
    <property type="project" value="UniProtKB-UniRule"/>
</dbReference>
<dbReference type="CDD" id="cd01764">
    <property type="entry name" value="Ubl_Urm1"/>
    <property type="match status" value="1"/>
</dbReference>
<dbReference type="FunFam" id="3.10.20.30:FF:000021">
    <property type="entry name" value="Ubiquitin-related modifier 1"/>
    <property type="match status" value="1"/>
</dbReference>
<dbReference type="Gene3D" id="3.10.20.30">
    <property type="match status" value="1"/>
</dbReference>
<dbReference type="HAMAP" id="MF_03048">
    <property type="entry name" value="Urm1"/>
    <property type="match status" value="1"/>
</dbReference>
<dbReference type="InterPro" id="IPR012675">
    <property type="entry name" value="Beta-grasp_dom_sf"/>
</dbReference>
<dbReference type="InterPro" id="IPR016155">
    <property type="entry name" value="Mopterin_synth/thiamin_S_b"/>
</dbReference>
<dbReference type="InterPro" id="IPR015221">
    <property type="entry name" value="Urm1"/>
</dbReference>
<dbReference type="PANTHER" id="PTHR14986">
    <property type="entry name" value="RURM1 PROTEIN"/>
    <property type="match status" value="1"/>
</dbReference>
<dbReference type="Pfam" id="PF09138">
    <property type="entry name" value="Urm1"/>
    <property type="match status" value="1"/>
</dbReference>
<dbReference type="PIRSF" id="PIRSF037379">
    <property type="entry name" value="Ubiquitin-related_modifier_1"/>
    <property type="match status" value="1"/>
</dbReference>
<dbReference type="SUPFAM" id="SSF54285">
    <property type="entry name" value="MoaD/ThiS"/>
    <property type="match status" value="1"/>
</dbReference>
<organism>
    <name type="scientific">Drosophila virilis</name>
    <name type="common">Fruit fly</name>
    <dbReference type="NCBI Taxonomy" id="7244"/>
    <lineage>
        <taxon>Eukaryota</taxon>
        <taxon>Metazoa</taxon>
        <taxon>Ecdysozoa</taxon>
        <taxon>Arthropoda</taxon>
        <taxon>Hexapoda</taxon>
        <taxon>Insecta</taxon>
        <taxon>Pterygota</taxon>
        <taxon>Neoptera</taxon>
        <taxon>Endopterygota</taxon>
        <taxon>Diptera</taxon>
        <taxon>Brachycera</taxon>
        <taxon>Muscomorpha</taxon>
        <taxon>Ephydroidea</taxon>
        <taxon>Drosophilidae</taxon>
        <taxon>Drosophila</taxon>
    </lineage>
</organism>
<keyword id="KW-0963">Cytoplasm</keyword>
<keyword id="KW-1017">Isopeptide bond</keyword>
<keyword id="KW-1185">Reference proteome</keyword>
<keyword id="KW-0819">tRNA processing</keyword>
<keyword id="KW-0833">Ubl conjugation pathway</keyword>
<comment type="function">
    <text evidence="2">Acts as a sulfur carrier required for 2-thiolation of mcm(5)S(2)U at tRNA wobble positions of cytosolic tRNA(Lys), tRNA(Glu) and tRNA(Gln). Serves as sulfur donor in tRNA 2-thiolation reaction by being thiocarboxylated (-COSH) at its C-terminus by MOCS3. The sulfur is then transferred to tRNA to form 2-thiolation of mcm(5)S(2)U. Also acts as a ubiquitin-like protein (UBL) that is covalently conjugated via an isopeptide bond to lysine residues of target proteins such as Prx2/Jafrac1, Ciao1, Eip71CD and GILT1. The thiocarboxylated form serves as substrate for conjugation and oxidative stress specifically induces the formation of UBL-protein conjugates.</text>
</comment>
<comment type="pathway">
    <text evidence="2">tRNA modification; 5-methoxycarbonylmethyl-2-thiouridine-tRNA biosynthesis.</text>
</comment>
<comment type="subunit">
    <text evidence="1">Interacts with cer.</text>
</comment>
<comment type="subcellular location">
    <subcellularLocation>
        <location evidence="2">Cytoplasm</location>
    </subcellularLocation>
</comment>
<comment type="PTM">
    <text evidence="2">C-terminal thiocarboxylation occurs in 2 steps, it is first acyl-adenylated (-COAMP) via the hesA/moeB/thiF part of the MOCS3 homolog, then thiocarboxylated (-COSH) via the rhodanese domain of the MOCS3 homolog.</text>
</comment>
<comment type="similarity">
    <text evidence="2">Belongs to the URM1 family.</text>
</comment>
<evidence type="ECO:0000250" key="1">
    <source>
        <dbReference type="UniProtKB" id="Q7KU86"/>
    </source>
</evidence>
<evidence type="ECO:0000255" key="2">
    <source>
        <dbReference type="HAMAP-Rule" id="MF_03048"/>
    </source>
</evidence>
<proteinExistence type="inferred from homology"/>
<feature type="chain" id="PRO_0000367864" description="Ubiquitin-related modifier 1 homolog">
    <location>
        <begin position="1"/>
        <end position="99"/>
    </location>
</feature>
<feature type="modified residue" description="1-thioglycine" evidence="2">
    <location>
        <position position="99"/>
    </location>
</feature>
<feature type="cross-link" description="Glycyl lysine isopeptide (Gly-Lys) (interchain with K-? in acceptor proteins)" evidence="2">
    <location>
        <position position="99"/>
    </location>
</feature>
<gene>
    <name evidence="1" type="primary">Urm1</name>
    <name type="ORF">GJ12350</name>
</gene>